<feature type="chain" id="PRO_0000353393" description="DNA-directed RNA polymerase subunit beta'">
    <location>
        <begin position="1"/>
        <end position="1390"/>
    </location>
</feature>
<feature type="region of interest" description="Disordered" evidence="2">
    <location>
        <begin position="1365"/>
        <end position="1390"/>
    </location>
</feature>
<feature type="binding site" evidence="1">
    <location>
        <position position="73"/>
    </location>
    <ligand>
        <name>Zn(2+)</name>
        <dbReference type="ChEBI" id="CHEBI:29105"/>
        <label>1</label>
    </ligand>
</feature>
<feature type="binding site" evidence="1">
    <location>
        <position position="75"/>
    </location>
    <ligand>
        <name>Zn(2+)</name>
        <dbReference type="ChEBI" id="CHEBI:29105"/>
        <label>1</label>
    </ligand>
</feature>
<feature type="binding site" evidence="1">
    <location>
        <position position="88"/>
    </location>
    <ligand>
        <name>Zn(2+)</name>
        <dbReference type="ChEBI" id="CHEBI:29105"/>
        <label>1</label>
    </ligand>
</feature>
<feature type="binding site" evidence="1">
    <location>
        <position position="91"/>
    </location>
    <ligand>
        <name>Zn(2+)</name>
        <dbReference type="ChEBI" id="CHEBI:29105"/>
        <label>1</label>
    </ligand>
</feature>
<feature type="binding site" evidence="1">
    <location>
        <position position="464"/>
    </location>
    <ligand>
        <name>Mg(2+)</name>
        <dbReference type="ChEBI" id="CHEBI:18420"/>
    </ligand>
</feature>
<feature type="binding site" evidence="1">
    <location>
        <position position="466"/>
    </location>
    <ligand>
        <name>Mg(2+)</name>
        <dbReference type="ChEBI" id="CHEBI:18420"/>
    </ligand>
</feature>
<feature type="binding site" evidence="1">
    <location>
        <position position="468"/>
    </location>
    <ligand>
        <name>Mg(2+)</name>
        <dbReference type="ChEBI" id="CHEBI:18420"/>
    </ligand>
</feature>
<feature type="binding site" evidence="1">
    <location>
        <position position="810"/>
    </location>
    <ligand>
        <name>Zn(2+)</name>
        <dbReference type="ChEBI" id="CHEBI:29105"/>
        <label>2</label>
    </ligand>
</feature>
<feature type="binding site" evidence="1">
    <location>
        <position position="884"/>
    </location>
    <ligand>
        <name>Zn(2+)</name>
        <dbReference type="ChEBI" id="CHEBI:29105"/>
        <label>2</label>
    </ligand>
</feature>
<feature type="binding site" evidence="1">
    <location>
        <position position="891"/>
    </location>
    <ligand>
        <name>Zn(2+)</name>
        <dbReference type="ChEBI" id="CHEBI:29105"/>
        <label>2</label>
    </ligand>
</feature>
<feature type="binding site" evidence="1">
    <location>
        <position position="894"/>
    </location>
    <ligand>
        <name>Zn(2+)</name>
        <dbReference type="ChEBI" id="CHEBI:29105"/>
        <label>2</label>
    </ligand>
</feature>
<keyword id="KW-0240">DNA-directed RNA polymerase</keyword>
<keyword id="KW-0460">Magnesium</keyword>
<keyword id="KW-0479">Metal-binding</keyword>
<keyword id="KW-0548">Nucleotidyltransferase</keyword>
<keyword id="KW-0804">Transcription</keyword>
<keyword id="KW-0808">Transferase</keyword>
<keyword id="KW-0862">Zinc</keyword>
<evidence type="ECO:0000255" key="1">
    <source>
        <dbReference type="HAMAP-Rule" id="MF_01322"/>
    </source>
</evidence>
<evidence type="ECO:0000256" key="2">
    <source>
        <dbReference type="SAM" id="MobiDB-lite"/>
    </source>
</evidence>
<comment type="function">
    <text evidence="1">DNA-dependent RNA polymerase catalyzes the transcription of DNA into RNA using the four ribonucleoside triphosphates as substrates.</text>
</comment>
<comment type="catalytic activity">
    <reaction evidence="1">
        <text>RNA(n) + a ribonucleoside 5'-triphosphate = RNA(n+1) + diphosphate</text>
        <dbReference type="Rhea" id="RHEA:21248"/>
        <dbReference type="Rhea" id="RHEA-COMP:14527"/>
        <dbReference type="Rhea" id="RHEA-COMP:17342"/>
        <dbReference type="ChEBI" id="CHEBI:33019"/>
        <dbReference type="ChEBI" id="CHEBI:61557"/>
        <dbReference type="ChEBI" id="CHEBI:140395"/>
        <dbReference type="EC" id="2.7.7.6"/>
    </reaction>
</comment>
<comment type="cofactor">
    <cofactor evidence="1">
        <name>Mg(2+)</name>
        <dbReference type="ChEBI" id="CHEBI:18420"/>
    </cofactor>
    <text evidence="1">Binds 1 Mg(2+) ion per subunit.</text>
</comment>
<comment type="cofactor">
    <cofactor evidence="1">
        <name>Zn(2+)</name>
        <dbReference type="ChEBI" id="CHEBI:29105"/>
    </cofactor>
    <text evidence="1">Binds 2 Zn(2+) ions per subunit.</text>
</comment>
<comment type="subunit">
    <text evidence="1">The RNAP catalytic core consists of 2 alpha, 1 beta, 1 beta' and 1 omega subunit. When a sigma factor is associated with the core the holoenzyme is formed, which can initiate transcription.</text>
</comment>
<comment type="similarity">
    <text evidence="1">Belongs to the RNA polymerase beta' chain family.</text>
</comment>
<sequence length="1390" mass="155876">MEAKNLTARQVLGFQKTIGFDEVRISIASPETIESWSKGEVRNPETINYRTFKPEKGGLFCERIFGPTKDWECACGKYKRIKYKGVICDRCGVEVTLSRVRRERMGHIKLAVPVSHIWFLKCMPSRLGLIMDMTAKDLERVIYYEDYLVVDPGKTPLRFKQLLSEQEYRDALAQYGEEAFVAKMGAEAVRDILKQIDLQALANDLTAAMEGTRSKQLKKKLAKRLKLVQGLINSETRPEWMILEVLPVIPPDLRPLVPLEGGRFATSDLNDLYRRVINRNNRLKNLLQLKTPDVIIRNEKRMLQEAVDALLDNGRHGRAVTGAGNRPLKSLSDMLQGKTGRFRMNLLGKRVDYSGRSVIVIGPELKLHQCGLPKKMALVLFEPFMIRRLRELGHVHTVRTAKKMIEKQDPLVWDVLEQVTAGHLVLLNRAPTLHRLSIQAFEPILIEGDAIRIHPLVCTAYNADFDGDQMAVHVPLSIEAQLEARLLMLAPLNIFSPSSGKPITTPTQDITLGCYYLTQPPLKIKVQEQKRKPLFSDAQEVIFAYNDGLLQMHDLILLKNPDYGRSTVFGDKNKKVIETTPGRVIFNQIWPPELGFYNKPAGKKQLGEIILKCYQTVGREKTVQCLDNLKELGFAEATKAGISIGIDDMIVPAEKTRIISKAYEMVNVVERQYRSGAITDGERYNKIVDIWTQATEEISGVIYKSLENNLGRPEYNPLFLMVDSGARGNRQQVRQLAGIRGLMAKPSGEIIERPIISNFREGLSVLEYFISTHGARKGLADTALKTADAGYLTRKLHDVAQDVVITMQDCGTNKGIIVQAIYEGDEEIVKLSERIYGRVCCDEIIDPMTGRIVVRPGELIDEKKAKEIEEAGAEKVKIRSVLTCESKWGVCASCYGLNLATNRMARLGESVGVIAAQSIGEPGTQLTMRTFHIGGTASQVFKQPQIRARNDGIVQYIDLRTVKTVDNHFIVLSKSGYLAVLDPSGRELERHTVIVGSIILIPDGEMVKKGQVFVQWDPYNVPILTEKGGIVEFRDIIEGVTVKKELDETTKQISTIVIEHKHDLHPQILILDENTREVIAFYGIPAGARIEVKPGDKVVAGQRIARTPRKMVQTKDITGGLPRVAELFEARKPKDSAEIAKIDGIVEDGGIIRGKRRILIRDPQTGSEEEHLIPLSKHLIVYKGDVVKKGQQLTEGPIVPQEILDVCGIQELQEYLLNEVQEVYRLQGVEINDKHIEIIIKQMLKKVKILDAGDTSFLWEEQVDRLKFEEENRIIEAKGGKPAVGIPVLLGITKASLDTDSFIAAASFQDTTRVLTEAATLGKVDPLKGFKENIIMGNLIPSGTGFRTYRNIRLVEVAPPEFKEEKKEQKIYGNGEEPAKEQKWIPQAGT</sequence>
<reference key="1">
    <citation type="journal article" date="2008" name="Biol. Direct">
        <title>Complete genome sequence of the extremely acidophilic methanotroph isolate V4, Methylacidiphilum infernorum, a representative of the bacterial phylum Verrucomicrobia.</title>
        <authorList>
            <person name="Hou S."/>
            <person name="Makarova K.S."/>
            <person name="Saw J.H."/>
            <person name="Senin P."/>
            <person name="Ly B.V."/>
            <person name="Zhou Z."/>
            <person name="Ren Y."/>
            <person name="Wang J."/>
            <person name="Galperin M.Y."/>
            <person name="Omelchenko M.V."/>
            <person name="Wolf Y.I."/>
            <person name="Yutin N."/>
            <person name="Koonin E.V."/>
            <person name="Stott M.B."/>
            <person name="Mountain B.W."/>
            <person name="Crowe M.A."/>
            <person name="Smirnova A.V."/>
            <person name="Dunfield P.F."/>
            <person name="Feng L."/>
            <person name="Wang L."/>
            <person name="Alam M."/>
        </authorList>
    </citation>
    <scope>NUCLEOTIDE SEQUENCE [LARGE SCALE GENOMIC DNA]</scope>
    <source>
        <strain>Isolate V4</strain>
    </source>
</reference>
<name>RPOC_METI4</name>
<accession>B3E164</accession>
<protein>
    <recommendedName>
        <fullName evidence="1">DNA-directed RNA polymerase subunit beta'</fullName>
        <shortName evidence="1">RNAP subunit beta'</shortName>
        <ecNumber evidence="1">2.7.7.6</ecNumber>
    </recommendedName>
    <alternativeName>
        <fullName evidence="1">RNA polymerase subunit beta'</fullName>
    </alternativeName>
    <alternativeName>
        <fullName evidence="1">Transcriptase subunit beta'</fullName>
    </alternativeName>
</protein>
<dbReference type="EC" id="2.7.7.6" evidence="1"/>
<dbReference type="EMBL" id="CP000975">
    <property type="protein sequence ID" value="ACD82860.1"/>
    <property type="molecule type" value="Genomic_DNA"/>
</dbReference>
<dbReference type="RefSeq" id="WP_012463142.1">
    <property type="nucleotide sequence ID" value="NC_010794.1"/>
</dbReference>
<dbReference type="SMR" id="B3E164"/>
<dbReference type="STRING" id="481448.Minf_0805"/>
<dbReference type="KEGG" id="min:Minf_0805"/>
<dbReference type="eggNOG" id="COG0086">
    <property type="taxonomic scope" value="Bacteria"/>
</dbReference>
<dbReference type="HOGENOM" id="CLU_000524_3_1_0"/>
<dbReference type="OrthoDB" id="9815296at2"/>
<dbReference type="Proteomes" id="UP000009149">
    <property type="component" value="Chromosome"/>
</dbReference>
<dbReference type="GO" id="GO:0000428">
    <property type="term" value="C:DNA-directed RNA polymerase complex"/>
    <property type="evidence" value="ECO:0007669"/>
    <property type="project" value="UniProtKB-KW"/>
</dbReference>
<dbReference type="GO" id="GO:0003677">
    <property type="term" value="F:DNA binding"/>
    <property type="evidence" value="ECO:0007669"/>
    <property type="project" value="UniProtKB-UniRule"/>
</dbReference>
<dbReference type="GO" id="GO:0003899">
    <property type="term" value="F:DNA-directed RNA polymerase activity"/>
    <property type="evidence" value="ECO:0007669"/>
    <property type="project" value="UniProtKB-UniRule"/>
</dbReference>
<dbReference type="GO" id="GO:0000287">
    <property type="term" value="F:magnesium ion binding"/>
    <property type="evidence" value="ECO:0007669"/>
    <property type="project" value="UniProtKB-UniRule"/>
</dbReference>
<dbReference type="GO" id="GO:0008270">
    <property type="term" value="F:zinc ion binding"/>
    <property type="evidence" value="ECO:0007669"/>
    <property type="project" value="UniProtKB-UniRule"/>
</dbReference>
<dbReference type="GO" id="GO:0006351">
    <property type="term" value="P:DNA-templated transcription"/>
    <property type="evidence" value="ECO:0007669"/>
    <property type="project" value="UniProtKB-UniRule"/>
</dbReference>
<dbReference type="CDD" id="cd02655">
    <property type="entry name" value="RNAP_beta'_C"/>
    <property type="match status" value="1"/>
</dbReference>
<dbReference type="CDD" id="cd01609">
    <property type="entry name" value="RNAP_beta'_N"/>
    <property type="match status" value="1"/>
</dbReference>
<dbReference type="FunFam" id="1.10.132.30:FF:000003">
    <property type="entry name" value="DNA-directed RNA polymerase subunit beta"/>
    <property type="match status" value="1"/>
</dbReference>
<dbReference type="Gene3D" id="1.10.132.30">
    <property type="match status" value="1"/>
</dbReference>
<dbReference type="Gene3D" id="1.10.150.390">
    <property type="match status" value="1"/>
</dbReference>
<dbReference type="Gene3D" id="1.10.1790.20">
    <property type="match status" value="1"/>
</dbReference>
<dbReference type="Gene3D" id="1.10.40.90">
    <property type="match status" value="1"/>
</dbReference>
<dbReference type="Gene3D" id="2.40.40.20">
    <property type="match status" value="1"/>
</dbReference>
<dbReference type="Gene3D" id="2.40.50.100">
    <property type="match status" value="3"/>
</dbReference>
<dbReference type="Gene3D" id="4.10.860.120">
    <property type="entry name" value="RNA polymerase II, clamp domain"/>
    <property type="match status" value="1"/>
</dbReference>
<dbReference type="Gene3D" id="1.10.274.100">
    <property type="entry name" value="RNA polymerase Rpb1, domain 3"/>
    <property type="match status" value="1"/>
</dbReference>
<dbReference type="HAMAP" id="MF_01322">
    <property type="entry name" value="RNApol_bact_RpoC"/>
    <property type="match status" value="1"/>
</dbReference>
<dbReference type="InterPro" id="IPR045867">
    <property type="entry name" value="DNA-dir_RpoC_beta_prime"/>
</dbReference>
<dbReference type="InterPro" id="IPR012754">
    <property type="entry name" value="DNA-dir_RpoC_beta_prime_bact"/>
</dbReference>
<dbReference type="InterPro" id="IPR000722">
    <property type="entry name" value="RNA_pol_asu"/>
</dbReference>
<dbReference type="InterPro" id="IPR006592">
    <property type="entry name" value="RNA_pol_N"/>
</dbReference>
<dbReference type="InterPro" id="IPR007080">
    <property type="entry name" value="RNA_pol_Rpb1_1"/>
</dbReference>
<dbReference type="InterPro" id="IPR007066">
    <property type="entry name" value="RNA_pol_Rpb1_3"/>
</dbReference>
<dbReference type="InterPro" id="IPR042102">
    <property type="entry name" value="RNA_pol_Rpb1_3_sf"/>
</dbReference>
<dbReference type="InterPro" id="IPR007083">
    <property type="entry name" value="RNA_pol_Rpb1_4"/>
</dbReference>
<dbReference type="InterPro" id="IPR007081">
    <property type="entry name" value="RNA_pol_Rpb1_5"/>
</dbReference>
<dbReference type="InterPro" id="IPR044893">
    <property type="entry name" value="RNA_pol_Rpb1_clamp_domain"/>
</dbReference>
<dbReference type="InterPro" id="IPR038120">
    <property type="entry name" value="Rpb1_funnel_sf"/>
</dbReference>
<dbReference type="NCBIfam" id="TIGR02386">
    <property type="entry name" value="rpoC_TIGR"/>
    <property type="match status" value="1"/>
</dbReference>
<dbReference type="PANTHER" id="PTHR19376">
    <property type="entry name" value="DNA-DIRECTED RNA POLYMERASE"/>
    <property type="match status" value="1"/>
</dbReference>
<dbReference type="PANTHER" id="PTHR19376:SF54">
    <property type="entry name" value="DNA-DIRECTED RNA POLYMERASE SUBUNIT BETA"/>
    <property type="match status" value="1"/>
</dbReference>
<dbReference type="Pfam" id="PF04997">
    <property type="entry name" value="RNA_pol_Rpb1_1"/>
    <property type="match status" value="1"/>
</dbReference>
<dbReference type="Pfam" id="PF00623">
    <property type="entry name" value="RNA_pol_Rpb1_2"/>
    <property type="match status" value="2"/>
</dbReference>
<dbReference type="Pfam" id="PF04983">
    <property type="entry name" value="RNA_pol_Rpb1_3"/>
    <property type="match status" value="1"/>
</dbReference>
<dbReference type="Pfam" id="PF05000">
    <property type="entry name" value="RNA_pol_Rpb1_4"/>
    <property type="match status" value="1"/>
</dbReference>
<dbReference type="Pfam" id="PF04998">
    <property type="entry name" value="RNA_pol_Rpb1_5"/>
    <property type="match status" value="1"/>
</dbReference>
<dbReference type="SMART" id="SM00663">
    <property type="entry name" value="RPOLA_N"/>
    <property type="match status" value="1"/>
</dbReference>
<dbReference type="SUPFAM" id="SSF64484">
    <property type="entry name" value="beta and beta-prime subunits of DNA dependent RNA-polymerase"/>
    <property type="match status" value="1"/>
</dbReference>
<proteinExistence type="inferred from homology"/>
<organism>
    <name type="scientific">Methylacidiphilum infernorum (isolate V4)</name>
    <name type="common">Methylokorus infernorum (strain V4)</name>
    <dbReference type="NCBI Taxonomy" id="481448"/>
    <lineage>
        <taxon>Bacteria</taxon>
        <taxon>Pseudomonadati</taxon>
        <taxon>Verrucomicrobiota</taxon>
        <taxon>Methylacidiphilae</taxon>
        <taxon>Methylacidiphilales</taxon>
        <taxon>Methylacidiphilaceae</taxon>
        <taxon>Methylacidiphilum (ex Ratnadevi et al. 2023)</taxon>
    </lineage>
</organism>
<gene>
    <name evidence="1" type="primary">rpoC</name>
    <name type="ordered locus">Minf_0805</name>
</gene>